<keyword id="KW-0002">3D-structure</keyword>
<keyword id="KW-0010">Activator</keyword>
<keyword id="KW-0963">Cytoplasm</keyword>
<keyword id="KW-0238">DNA-binding</keyword>
<keyword id="KW-0597">Phosphoprotein</keyword>
<keyword id="KW-1185">Reference proteome</keyword>
<keyword id="KW-0678">Repressor</keyword>
<keyword id="KW-0804">Transcription</keyword>
<keyword id="KW-0805">Transcription regulation</keyword>
<keyword id="KW-0902">Two-component regulatory system</keyword>
<keyword id="KW-0843">Virulence</keyword>
<organism>
    <name type="scientific">Staphylococcus aureus (strain NCTC 8325 / PS 47)</name>
    <dbReference type="NCBI Taxonomy" id="93061"/>
    <lineage>
        <taxon>Bacteria</taxon>
        <taxon>Bacillati</taxon>
        <taxon>Bacillota</taxon>
        <taxon>Bacilli</taxon>
        <taxon>Bacillales</taxon>
        <taxon>Staphylococcaceae</taxon>
        <taxon>Staphylococcus</taxon>
    </lineage>
</organism>
<evidence type="ECO:0000250" key="1"/>
<evidence type="ECO:0000255" key="2">
    <source>
        <dbReference type="PROSITE-ProRule" id="PRU00169"/>
    </source>
</evidence>
<evidence type="ECO:0000255" key="3">
    <source>
        <dbReference type="PROSITE-ProRule" id="PRU01091"/>
    </source>
</evidence>
<evidence type="ECO:0000269" key="4">
    <source>
    </source>
</evidence>
<evidence type="ECO:0000269" key="5">
    <source>
    </source>
</evidence>
<evidence type="ECO:0000269" key="6">
    <source>
    </source>
</evidence>
<evidence type="ECO:0000269" key="7">
    <source>
    </source>
</evidence>
<evidence type="ECO:0000269" key="8">
    <source>
    </source>
</evidence>
<evidence type="ECO:0000305" key="9"/>
<evidence type="ECO:0007829" key="10">
    <source>
        <dbReference type="PDB" id="6KYX"/>
    </source>
</evidence>
<name>ARLR_STAA8</name>
<proteinExistence type="evidence at protein level"/>
<accession>Q9KJN4</accession>
<accession>Q2FYL9</accession>
<sequence length="219" mass="25498">MTQILIVEDEQNLARFLELELTHENYNVDTEYDGQDGLDKALSHYYDLIILDLMLPSINGLEICRKIRQQQSTPIIIITAKSDTYDKVAGLDYGADDYIVKPFDIEELLARIRAILRRQPQKDIIDVNGITIDKNAFKVTVNGAEIELTKTEYDLLYLLAENKNHVMQREQILNHVWGYNSEVETNVVDVYIRYLRNKLKPYDRDKMIETVRGVGYVIR</sequence>
<feature type="chain" id="PRO_0000081013" description="Response regulator ArlR">
    <location>
        <begin position="1"/>
        <end position="219"/>
    </location>
</feature>
<feature type="domain" description="Response regulatory" evidence="2">
    <location>
        <begin position="3"/>
        <end position="116"/>
    </location>
</feature>
<feature type="DNA-binding region" description="OmpR/PhoB-type" evidence="3">
    <location>
        <begin position="122"/>
        <end position="219"/>
    </location>
</feature>
<feature type="modified residue" description="4-aspartylphosphate" evidence="2">
    <location>
        <position position="52"/>
    </location>
</feature>
<feature type="strand" evidence="10">
    <location>
        <begin position="123"/>
        <end position="127"/>
    </location>
</feature>
<feature type="strand" evidence="10">
    <location>
        <begin position="130"/>
        <end position="134"/>
    </location>
</feature>
<feature type="strand" evidence="10">
    <location>
        <begin position="138"/>
        <end position="141"/>
    </location>
</feature>
<feature type="strand" evidence="10">
    <location>
        <begin position="144"/>
        <end position="147"/>
    </location>
</feature>
<feature type="helix" evidence="10">
    <location>
        <begin position="150"/>
        <end position="161"/>
    </location>
</feature>
<feature type="turn" evidence="10">
    <location>
        <begin position="162"/>
        <end position="164"/>
    </location>
</feature>
<feature type="helix" evidence="10">
    <location>
        <begin position="169"/>
        <end position="177"/>
    </location>
</feature>
<feature type="helix" evidence="10">
    <location>
        <begin position="187"/>
        <end position="199"/>
    </location>
</feature>
<feature type="helix" evidence="10">
    <location>
        <begin position="200"/>
        <end position="202"/>
    </location>
</feature>
<feature type="helix" evidence="10">
    <location>
        <begin position="205"/>
        <end position="207"/>
    </location>
</feature>
<feature type="strand" evidence="10">
    <location>
        <begin position="208"/>
        <end position="211"/>
    </location>
</feature>
<feature type="turn" evidence="10">
    <location>
        <begin position="212"/>
        <end position="214"/>
    </location>
</feature>
<feature type="strand" evidence="10">
    <location>
        <begin position="215"/>
        <end position="218"/>
    </location>
</feature>
<gene>
    <name type="primary">arlR</name>
    <name type="ordered locus">SAOUHSC_01420</name>
</gene>
<comment type="function">
    <text evidence="4 5 6 7 8">Member of the two-component regulatory system ArlS/ArlR involved in the regulation of adhesion, autolysis, multidrug resistance and virulence. ArlS/ArlR affects expression of the multidrug resistance transporter NorA and interacts with both Agr (virulence accessory gene regulator) (negatively) and SarA (staphylococcal accessory regulator) (positively) to modulate several virulence factor genes, including ssp (serine protease), spa (surface protein A) and hla (alpha-hemolysin). Could inhibit biofilm development by a mechanism independent of the presence of the poly-N-acetylglucosamine (PNAG). Also, Arl proteins are required for the efficient activity of DNA gyrase inhibitors and high osmolarity on spa expression.</text>
</comment>
<comment type="subcellular location">
    <subcellularLocation>
        <location evidence="1">Cytoplasm</location>
    </subcellularLocation>
</comment>
<comment type="induction">
    <text>Activated by Agr, SarA, SarV and MgrA.</text>
</comment>
<comment type="PTM">
    <text evidence="9">Phosphorylated by ArlS.</text>
</comment>
<dbReference type="EMBL" id="AF165314">
    <property type="protein sequence ID" value="AAF85896.1"/>
    <property type="molecule type" value="Genomic_DNA"/>
</dbReference>
<dbReference type="EMBL" id="CP000253">
    <property type="protein sequence ID" value="ABD30513.1"/>
    <property type="molecule type" value="Genomic_DNA"/>
</dbReference>
<dbReference type="RefSeq" id="WP_000192137.1">
    <property type="nucleotide sequence ID" value="NZ_LS483365.1"/>
</dbReference>
<dbReference type="RefSeq" id="YP_499946.1">
    <property type="nucleotide sequence ID" value="NC_007795.1"/>
</dbReference>
<dbReference type="PDB" id="6IJU">
    <property type="method" value="X-ray"/>
    <property type="resolution" value="2.40 A"/>
    <property type="chains" value="A=123-219"/>
</dbReference>
<dbReference type="PDB" id="6IS1">
    <property type="method" value="X-ray"/>
    <property type="resolution" value="1.59 A"/>
    <property type="chains" value="A/B/C/D/E/F/G/H=2-121"/>
</dbReference>
<dbReference type="PDB" id="6IS2">
    <property type="method" value="X-ray"/>
    <property type="resolution" value="1.59 A"/>
    <property type="chains" value="A/B/C/D=2-121"/>
</dbReference>
<dbReference type="PDB" id="6IS3">
    <property type="method" value="X-ray"/>
    <property type="resolution" value="1.55 A"/>
    <property type="chains" value="A/C=2-119"/>
</dbReference>
<dbReference type="PDB" id="6IS4">
    <property type="method" value="X-ray"/>
    <property type="resolution" value="1.85 A"/>
    <property type="chains" value="A=123-219"/>
</dbReference>
<dbReference type="PDB" id="6KYX">
    <property type="method" value="X-ray"/>
    <property type="resolution" value="2.00 A"/>
    <property type="chains" value="A=122-219"/>
</dbReference>
<dbReference type="PDBsum" id="6IJU"/>
<dbReference type="PDBsum" id="6IS1"/>
<dbReference type="PDBsum" id="6IS2"/>
<dbReference type="PDBsum" id="6IS3"/>
<dbReference type="PDBsum" id="6IS4"/>
<dbReference type="PDBsum" id="6KYX"/>
<dbReference type="SMR" id="Q9KJN4"/>
<dbReference type="STRING" id="93061.SAOUHSC_01420"/>
<dbReference type="PaxDb" id="1280-SAXN108_1434"/>
<dbReference type="GeneID" id="3920651"/>
<dbReference type="KEGG" id="sao:SAOUHSC_01420"/>
<dbReference type="PATRIC" id="fig|93061.5.peg.1299"/>
<dbReference type="eggNOG" id="COG0745">
    <property type="taxonomic scope" value="Bacteria"/>
</dbReference>
<dbReference type="HOGENOM" id="CLU_000445_30_1_9"/>
<dbReference type="OrthoDB" id="9790442at2"/>
<dbReference type="PRO" id="PR:Q9KJN4"/>
<dbReference type="Proteomes" id="UP000008816">
    <property type="component" value="Chromosome"/>
</dbReference>
<dbReference type="GO" id="GO:0005829">
    <property type="term" value="C:cytosol"/>
    <property type="evidence" value="ECO:0000318"/>
    <property type="project" value="GO_Central"/>
</dbReference>
<dbReference type="GO" id="GO:0032993">
    <property type="term" value="C:protein-DNA complex"/>
    <property type="evidence" value="ECO:0000318"/>
    <property type="project" value="GO_Central"/>
</dbReference>
<dbReference type="GO" id="GO:0000156">
    <property type="term" value="F:phosphorelay response regulator activity"/>
    <property type="evidence" value="ECO:0000318"/>
    <property type="project" value="GO_Central"/>
</dbReference>
<dbReference type="GO" id="GO:0000976">
    <property type="term" value="F:transcription cis-regulatory region binding"/>
    <property type="evidence" value="ECO:0000318"/>
    <property type="project" value="GO_Central"/>
</dbReference>
<dbReference type="GO" id="GO:0006355">
    <property type="term" value="P:regulation of DNA-templated transcription"/>
    <property type="evidence" value="ECO:0000318"/>
    <property type="project" value="GO_Central"/>
</dbReference>
<dbReference type="CDD" id="cd00383">
    <property type="entry name" value="trans_reg_C"/>
    <property type="match status" value="1"/>
</dbReference>
<dbReference type="FunFam" id="3.40.50.2300:FF:000001">
    <property type="entry name" value="DNA-binding response regulator PhoB"/>
    <property type="match status" value="1"/>
</dbReference>
<dbReference type="FunFam" id="1.10.10.10:FF:000005">
    <property type="entry name" value="Two-component system response regulator"/>
    <property type="match status" value="1"/>
</dbReference>
<dbReference type="Gene3D" id="3.40.50.2300">
    <property type="match status" value="1"/>
</dbReference>
<dbReference type="Gene3D" id="6.10.250.690">
    <property type="match status" value="1"/>
</dbReference>
<dbReference type="Gene3D" id="1.10.10.10">
    <property type="entry name" value="Winged helix-like DNA-binding domain superfamily/Winged helix DNA-binding domain"/>
    <property type="match status" value="1"/>
</dbReference>
<dbReference type="InterPro" id="IPR011006">
    <property type="entry name" value="CheY-like_superfamily"/>
</dbReference>
<dbReference type="InterPro" id="IPR001867">
    <property type="entry name" value="OmpR/PhoB-type_DNA-bd"/>
</dbReference>
<dbReference type="InterPro" id="IPR016032">
    <property type="entry name" value="Sig_transdc_resp-reg_C-effctor"/>
</dbReference>
<dbReference type="InterPro" id="IPR001789">
    <property type="entry name" value="Sig_transdc_resp-reg_receiver"/>
</dbReference>
<dbReference type="InterPro" id="IPR039420">
    <property type="entry name" value="WalR-like"/>
</dbReference>
<dbReference type="InterPro" id="IPR036388">
    <property type="entry name" value="WH-like_DNA-bd_sf"/>
</dbReference>
<dbReference type="PANTHER" id="PTHR48111">
    <property type="entry name" value="REGULATOR OF RPOS"/>
    <property type="match status" value="1"/>
</dbReference>
<dbReference type="PANTHER" id="PTHR48111:SF22">
    <property type="entry name" value="REGULATOR OF RPOS"/>
    <property type="match status" value="1"/>
</dbReference>
<dbReference type="Pfam" id="PF00072">
    <property type="entry name" value="Response_reg"/>
    <property type="match status" value="1"/>
</dbReference>
<dbReference type="Pfam" id="PF00486">
    <property type="entry name" value="Trans_reg_C"/>
    <property type="match status" value="1"/>
</dbReference>
<dbReference type="SMART" id="SM00448">
    <property type="entry name" value="REC"/>
    <property type="match status" value="1"/>
</dbReference>
<dbReference type="SMART" id="SM00862">
    <property type="entry name" value="Trans_reg_C"/>
    <property type="match status" value="1"/>
</dbReference>
<dbReference type="SUPFAM" id="SSF46894">
    <property type="entry name" value="C-terminal effector domain of the bipartite response regulators"/>
    <property type="match status" value="1"/>
</dbReference>
<dbReference type="SUPFAM" id="SSF52172">
    <property type="entry name" value="CheY-like"/>
    <property type="match status" value="1"/>
</dbReference>
<dbReference type="PROSITE" id="PS51755">
    <property type="entry name" value="OMPR_PHOB"/>
    <property type="match status" value="1"/>
</dbReference>
<dbReference type="PROSITE" id="PS50110">
    <property type="entry name" value="RESPONSE_REGULATORY"/>
    <property type="match status" value="1"/>
</dbReference>
<protein>
    <recommendedName>
        <fullName>Response regulator ArlR</fullName>
    </recommendedName>
</protein>
<reference key="1">
    <citation type="journal article" date="2000" name="J. Bacteriol.">
        <title>A new two-component regulatory system involved in adhesion, autolysis, and extracellular proteolytic activity of Staphylococcus aureus.</title>
        <authorList>
            <person name="Fournier B."/>
            <person name="Hooper D.C."/>
        </authorList>
    </citation>
    <scope>NUCLEOTIDE SEQUENCE [GENOMIC DNA]</scope>
    <scope>FUNCTION</scope>
</reference>
<reference key="2">
    <citation type="book" date="2006" name="Gram positive pathogens, 2nd edition">
        <title>The Staphylococcus aureus NCTC 8325 genome.</title>
        <editorList>
            <person name="Fischetti V."/>
            <person name="Novick R."/>
            <person name="Ferretti J."/>
            <person name="Portnoy D."/>
            <person name="Rood J."/>
        </editorList>
        <authorList>
            <person name="Gillaspy A.F."/>
            <person name="Worrell V."/>
            <person name="Orvis J."/>
            <person name="Roe B.A."/>
            <person name="Dyer D.W."/>
            <person name="Iandolo J.J."/>
        </authorList>
    </citation>
    <scope>NUCLEOTIDE SEQUENCE [LARGE SCALE GENOMIC DNA]</scope>
    <source>
        <strain>NCTC 8325 / PS 47</strain>
    </source>
</reference>
<reference key="3">
    <citation type="journal article" date="2000" name="J. Bacteriol.">
        <title>Expression of the multidrug resistance transporter NorA from Staphylococcus aureus is modified by a two-component regulatory system.</title>
        <authorList>
            <person name="Fournier B."/>
            <person name="Aras R."/>
            <person name="Hooper D.C."/>
        </authorList>
    </citation>
    <scope>FUNCTION</scope>
</reference>
<reference key="4">
    <citation type="journal article" date="2001" name="Mol. Microbiol.">
        <title>The two-component system ArlS-ArlR is a regulator of virulence gene expression in Staphylococcus aureus.</title>
        <authorList>
            <person name="Fournier B."/>
            <person name="Klier A."/>
            <person name="Rapoport G."/>
        </authorList>
    </citation>
    <scope>FUNCTION</scope>
    <scope>REGULATION</scope>
</reference>
<reference key="5">
    <citation type="journal article" date="2003" name="Mol. Microbiol.">
        <title>Characterization of RAT, an autolysis regulator in Staphylococcus aureus.</title>
        <authorList>
            <person name="Ingavale S.S."/>
            <person name="Van Wamel W."/>
            <person name="Cheung A.L."/>
        </authorList>
    </citation>
    <scope>REGULATION BY MGRA</scope>
</reference>
<reference key="6">
    <citation type="journal article" date="2004" name="J. Bacteriol.">
        <title>Identification of sarV (SA2062), a new transcriptional regulator, is repressed by SarA and MgrA (SA0641) and involved in the regulation of autolysis in Staphylococcus aureus.</title>
        <authorList>
            <person name="Manna A.C."/>
            <person name="Ingavale S.S."/>
            <person name="Maloney M."/>
            <person name="van Wamel W."/>
            <person name="Cheung A.L."/>
        </authorList>
    </citation>
    <scope>REGULATION BY SARV</scope>
</reference>
<reference key="7">
    <citation type="journal article" date="2004" name="Microbiology">
        <title>Protein A gene expression is regulated by DNA supercoiling which is modified by the ArlS-ArlR two-component system of Staphylococcus aureus.</title>
        <authorList>
            <person name="Fournier B."/>
            <person name="Klier A."/>
        </authorList>
    </citation>
    <scope>FUNCTION</scope>
</reference>
<reference key="8">
    <citation type="journal article" date="2005" name="J. Bacteriol.">
        <title>Staphylococcus aureus develops an alternative, ica-independent biofilm in the absence of the arlRS two-component system.</title>
        <authorList>
            <person name="Toledo-Arana A."/>
            <person name="Merino N."/>
            <person name="Vergara-Irigaray M."/>
            <person name="Debarbouille M."/>
            <person name="Penades J.R."/>
            <person name="Lasa I."/>
        </authorList>
    </citation>
    <scope>FUNCTION IN BIOFILM DEVELOPMENT</scope>
</reference>